<sequence length="160" mass="17632">MNIIQSGITAENSSIAIIIARFNEFINKNLLLGALDTLKRIGQVHEENILKIYVPGTYEIPTIASYIAKSGKYDAIIAIGTIIKGQTDHFKYIANDTSSSLSRISTQYFLPITLGILTTKNIEQSIERSGTKMGNKGSDAALAALEMINVMKKLKKVIYY</sequence>
<gene>
    <name evidence="1" type="primary">ribH</name>
    <name type="ordered locus">BUAP5A_452</name>
</gene>
<dbReference type="EC" id="2.5.1.78" evidence="1"/>
<dbReference type="EMBL" id="CP001161">
    <property type="protein sequence ID" value="ACL30807.1"/>
    <property type="molecule type" value="Genomic_DNA"/>
</dbReference>
<dbReference type="SMR" id="B8D9N6"/>
<dbReference type="KEGG" id="bap:BUAP5A_452"/>
<dbReference type="HOGENOM" id="CLU_089358_1_1_6"/>
<dbReference type="OrthoDB" id="9809709at2"/>
<dbReference type="UniPathway" id="UPA00275">
    <property type="reaction ID" value="UER00404"/>
</dbReference>
<dbReference type="Proteomes" id="UP000006904">
    <property type="component" value="Chromosome"/>
</dbReference>
<dbReference type="GO" id="GO:0005829">
    <property type="term" value="C:cytosol"/>
    <property type="evidence" value="ECO:0007669"/>
    <property type="project" value="TreeGrafter"/>
</dbReference>
<dbReference type="GO" id="GO:0009349">
    <property type="term" value="C:riboflavin synthase complex"/>
    <property type="evidence" value="ECO:0007669"/>
    <property type="project" value="InterPro"/>
</dbReference>
<dbReference type="GO" id="GO:0000906">
    <property type="term" value="F:6,7-dimethyl-8-ribityllumazine synthase activity"/>
    <property type="evidence" value="ECO:0007669"/>
    <property type="project" value="UniProtKB-UniRule"/>
</dbReference>
<dbReference type="GO" id="GO:0009231">
    <property type="term" value="P:riboflavin biosynthetic process"/>
    <property type="evidence" value="ECO:0007669"/>
    <property type="project" value="UniProtKB-UniRule"/>
</dbReference>
<dbReference type="CDD" id="cd09209">
    <property type="entry name" value="Lumazine_synthase-I"/>
    <property type="match status" value="1"/>
</dbReference>
<dbReference type="Gene3D" id="3.40.50.960">
    <property type="entry name" value="Lumazine/riboflavin synthase"/>
    <property type="match status" value="1"/>
</dbReference>
<dbReference type="HAMAP" id="MF_00178">
    <property type="entry name" value="Lumazine_synth"/>
    <property type="match status" value="1"/>
</dbReference>
<dbReference type="InterPro" id="IPR034964">
    <property type="entry name" value="LS"/>
</dbReference>
<dbReference type="InterPro" id="IPR002180">
    <property type="entry name" value="LS/RS"/>
</dbReference>
<dbReference type="InterPro" id="IPR036467">
    <property type="entry name" value="LS/RS_sf"/>
</dbReference>
<dbReference type="NCBIfam" id="TIGR00114">
    <property type="entry name" value="lumazine-synth"/>
    <property type="match status" value="1"/>
</dbReference>
<dbReference type="NCBIfam" id="NF000812">
    <property type="entry name" value="PRK00061.1-4"/>
    <property type="match status" value="1"/>
</dbReference>
<dbReference type="PANTHER" id="PTHR21058:SF0">
    <property type="entry name" value="6,7-DIMETHYL-8-RIBITYLLUMAZINE SYNTHASE"/>
    <property type="match status" value="1"/>
</dbReference>
<dbReference type="PANTHER" id="PTHR21058">
    <property type="entry name" value="6,7-DIMETHYL-8-RIBITYLLUMAZINE SYNTHASE DMRL SYNTHASE LUMAZINE SYNTHASE"/>
    <property type="match status" value="1"/>
</dbReference>
<dbReference type="Pfam" id="PF00885">
    <property type="entry name" value="DMRL_synthase"/>
    <property type="match status" value="1"/>
</dbReference>
<dbReference type="SUPFAM" id="SSF52121">
    <property type="entry name" value="Lumazine synthase"/>
    <property type="match status" value="1"/>
</dbReference>
<organism>
    <name type="scientific">Buchnera aphidicola subsp. Acyrthosiphon pisum (strain 5A)</name>
    <dbReference type="NCBI Taxonomy" id="563178"/>
    <lineage>
        <taxon>Bacteria</taxon>
        <taxon>Pseudomonadati</taxon>
        <taxon>Pseudomonadota</taxon>
        <taxon>Gammaproteobacteria</taxon>
        <taxon>Enterobacterales</taxon>
        <taxon>Erwiniaceae</taxon>
        <taxon>Buchnera</taxon>
    </lineage>
</organism>
<evidence type="ECO:0000255" key="1">
    <source>
        <dbReference type="HAMAP-Rule" id="MF_00178"/>
    </source>
</evidence>
<comment type="function">
    <text evidence="1">Catalyzes the formation of 6,7-dimethyl-8-ribityllumazine by condensation of 5-amino-6-(D-ribitylamino)uracil with 3,4-dihydroxy-2-butanone 4-phosphate. This is the penultimate step in the biosynthesis of riboflavin.</text>
</comment>
<comment type="catalytic activity">
    <reaction evidence="1">
        <text>(2S)-2-hydroxy-3-oxobutyl phosphate + 5-amino-6-(D-ribitylamino)uracil = 6,7-dimethyl-8-(1-D-ribityl)lumazine + phosphate + 2 H2O + H(+)</text>
        <dbReference type="Rhea" id="RHEA:26152"/>
        <dbReference type="ChEBI" id="CHEBI:15377"/>
        <dbReference type="ChEBI" id="CHEBI:15378"/>
        <dbReference type="ChEBI" id="CHEBI:15934"/>
        <dbReference type="ChEBI" id="CHEBI:43474"/>
        <dbReference type="ChEBI" id="CHEBI:58201"/>
        <dbReference type="ChEBI" id="CHEBI:58830"/>
        <dbReference type="EC" id="2.5.1.78"/>
    </reaction>
</comment>
<comment type="pathway">
    <text evidence="1">Cofactor biosynthesis; riboflavin biosynthesis; riboflavin from 2-hydroxy-3-oxobutyl phosphate and 5-amino-6-(D-ribitylamino)uracil: step 1/2.</text>
</comment>
<comment type="subunit">
    <text evidence="1">Forms an icosahedral capsid composed of 60 subunits, arranged as a dodecamer of pentamers.</text>
</comment>
<comment type="similarity">
    <text evidence="1">Belongs to the DMRL synthase family.</text>
</comment>
<accession>B8D9N6</accession>
<proteinExistence type="inferred from homology"/>
<feature type="chain" id="PRO_1000195466" description="6,7-dimethyl-8-ribityllumazine synthase">
    <location>
        <begin position="1"/>
        <end position="160"/>
    </location>
</feature>
<feature type="active site" description="Proton donor" evidence="1">
    <location>
        <position position="89"/>
    </location>
</feature>
<feature type="binding site" evidence="1">
    <location>
        <position position="22"/>
    </location>
    <ligand>
        <name>5-amino-6-(D-ribitylamino)uracil</name>
        <dbReference type="ChEBI" id="CHEBI:15934"/>
    </ligand>
</feature>
<feature type="binding site" evidence="1">
    <location>
        <begin position="57"/>
        <end position="59"/>
    </location>
    <ligand>
        <name>5-amino-6-(D-ribitylamino)uracil</name>
        <dbReference type="ChEBI" id="CHEBI:15934"/>
    </ligand>
</feature>
<feature type="binding site" evidence="1">
    <location>
        <begin position="81"/>
        <end position="83"/>
    </location>
    <ligand>
        <name>5-amino-6-(D-ribitylamino)uracil</name>
        <dbReference type="ChEBI" id="CHEBI:15934"/>
    </ligand>
</feature>
<feature type="binding site" evidence="1">
    <location>
        <begin position="86"/>
        <end position="87"/>
    </location>
    <ligand>
        <name>(2S)-2-hydroxy-3-oxobutyl phosphate</name>
        <dbReference type="ChEBI" id="CHEBI:58830"/>
    </ligand>
</feature>
<feature type="binding site" evidence="1">
    <location>
        <position position="114"/>
    </location>
    <ligand>
        <name>5-amino-6-(D-ribitylamino)uracil</name>
        <dbReference type="ChEBI" id="CHEBI:15934"/>
    </ligand>
</feature>
<feature type="binding site" evidence="1">
    <location>
        <position position="128"/>
    </location>
    <ligand>
        <name>(2S)-2-hydroxy-3-oxobutyl phosphate</name>
        <dbReference type="ChEBI" id="CHEBI:58830"/>
    </ligand>
</feature>
<protein>
    <recommendedName>
        <fullName evidence="1">6,7-dimethyl-8-ribityllumazine synthase</fullName>
        <shortName evidence="1">DMRL synthase</shortName>
        <shortName evidence="1">LS</shortName>
        <shortName evidence="1">Lumazine synthase</shortName>
        <ecNumber evidence="1">2.5.1.78</ecNumber>
    </recommendedName>
</protein>
<keyword id="KW-0686">Riboflavin biosynthesis</keyword>
<keyword id="KW-0808">Transferase</keyword>
<reference key="1">
    <citation type="journal article" date="2009" name="Science">
        <title>The dynamics and time scale of ongoing genomic erosion in symbiotic bacteria.</title>
        <authorList>
            <person name="Moran N.A."/>
            <person name="McLaughlin H.J."/>
            <person name="Sorek R."/>
        </authorList>
    </citation>
    <scope>NUCLEOTIDE SEQUENCE [LARGE SCALE GENOMIC DNA]</scope>
    <source>
        <strain>5A</strain>
    </source>
</reference>
<name>RISB_BUCA5</name>